<dbReference type="EC" id="2.7.7.-" evidence="1"/>
<dbReference type="EMBL" id="MWPT03000002">
    <property type="status" value="NOT_ANNOTATED_CDS"/>
    <property type="molecule type" value="Genomic_DNA"/>
</dbReference>
<dbReference type="OrthoDB" id="76766at6447"/>
<dbReference type="Proteomes" id="UP000694844">
    <property type="component" value="Chromosome 5"/>
</dbReference>
<dbReference type="GO" id="GO:0046872">
    <property type="term" value="F:metal ion binding"/>
    <property type="evidence" value="ECO:0007669"/>
    <property type="project" value="UniProtKB-KW"/>
</dbReference>
<dbReference type="GO" id="GO:0016779">
    <property type="term" value="F:nucleotidyltransferase activity"/>
    <property type="evidence" value="ECO:0007669"/>
    <property type="project" value="UniProtKB-KW"/>
</dbReference>
<dbReference type="GO" id="GO:0045087">
    <property type="term" value="P:innate immune response"/>
    <property type="evidence" value="ECO:0007669"/>
    <property type="project" value="UniProtKB-KW"/>
</dbReference>
<dbReference type="Gene3D" id="1.10.1410.40">
    <property type="match status" value="1"/>
</dbReference>
<dbReference type="InterPro" id="IPR046906">
    <property type="entry name" value="Mab-21_HhH/H2TH-like"/>
</dbReference>
<dbReference type="InterPro" id="IPR024810">
    <property type="entry name" value="MAB21L/cGLR"/>
</dbReference>
<dbReference type="PANTHER" id="PTHR10656">
    <property type="entry name" value="CELL FATE DETERMINING PROTEIN MAB21-RELATED"/>
    <property type="match status" value="1"/>
</dbReference>
<dbReference type="PANTHER" id="PTHR10656:SF42">
    <property type="entry name" value="CYCLIC GMP-AMP SYNTHASE-LIKE PROTEIN-RELATED"/>
    <property type="match status" value="1"/>
</dbReference>
<dbReference type="Pfam" id="PF20266">
    <property type="entry name" value="Mab-21_C"/>
    <property type="match status" value="1"/>
</dbReference>
<dbReference type="SMART" id="SM01265">
    <property type="entry name" value="Mab-21"/>
    <property type="match status" value="1"/>
</dbReference>
<sequence length="632" mass="72826">MNASESCEELNATLSAYLESLDSRQRQVEEIRQLHHKVWAMKTNHAPIIEHRAGSRVEKQTRICPNDIRSDIDFMLEVNNVVVFAKGNGGICFQPTSRDGYFGRILISDQYRDSLMIDTHLKAIFTESSLKRDKFSNRFVLVPNVFKQNVVRESGLKYQQTKSPQSTGPSIPGRGVVNEYDVVPCLRLNTWPEETTTWISRGKPLSVFDPSWRKKVLVASPVFLVAAGEINSCFQKEQFRTSFSMPEIECFKKLPNLVRQLFGLAKYVFTYLLSSVGFLSWFHIKYLLFWMVEKDEIDWNNISPVCFLFHLMDSIKQSVRDGNVQHFFLDNCNIFPEHRRTYEREYAYDQILSDKQLVTECLKRLLRTELLETSRTVMASEFTNTESRLVSSNTYCDGYLTRLLSVIVFVWQETSASEKMSSSFAEKILEDCGVNEYTRKLVTILELYFRGNVPGKLSLNSLAHGAFLAYMQGDFAVCLSSCSQHVTSTCVRDDDCILGVTLTRYDRTPHLDEPLRFALDRLEQKFGTCPRVSLHPLFFLKHVLLQCELKKRDNGLKCLDTLFSDLHGFSKSLSPRTPYCGLLSYQAVAFLVIEGYNEYFKRENIDIRLYETDTYVKLDISLTPATCSFDLR</sequence>
<name>CGLR2_CRAVI</name>
<gene>
    <name evidence="5" type="primary">cGLR2</name>
</gene>
<keyword id="KW-0391">Immunity</keyword>
<keyword id="KW-0399">Innate immunity</keyword>
<keyword id="KW-0460">Magnesium</keyword>
<keyword id="KW-0464">Manganese</keyword>
<keyword id="KW-0479">Metal-binding</keyword>
<keyword id="KW-0548">Nucleotidyltransferase</keyword>
<keyword id="KW-1185">Reference proteome</keyword>
<keyword id="KW-0808">Transferase</keyword>
<comment type="function">
    <text evidence="4">Nucleotidyltransferase that catalyzes the formation of some cyclic nucleotide and plays a key role in innate immunity (PubMed:37379839). Directly binds some unknown ligand, activating the nucleotidyltransferase activity, leading to synthesis of a second messenger that binds to and activates Sting, thereby triggering the immune response via activation of the NF-kappa-B transcription factor (PubMed:37379839).</text>
</comment>
<comment type="cofactor">
    <cofactor evidence="2">
        <name>Mg(2+)</name>
        <dbReference type="ChEBI" id="CHEBI:18420"/>
    </cofactor>
    <cofactor evidence="2">
        <name>Mn(2+)</name>
        <dbReference type="ChEBI" id="CHEBI:29035"/>
    </cofactor>
</comment>
<comment type="similarity">
    <text evidence="6">Belongs to the mab-21 family.</text>
</comment>
<evidence type="ECO:0000250" key="1">
    <source>
        <dbReference type="UniProtKB" id="A0A3M6TIF0"/>
    </source>
</evidence>
<evidence type="ECO:0000250" key="2">
    <source>
        <dbReference type="UniProtKB" id="D6WI29"/>
    </source>
</evidence>
<evidence type="ECO:0000250" key="3">
    <source>
        <dbReference type="UniProtKB" id="Q8N884"/>
    </source>
</evidence>
<evidence type="ECO:0000269" key="4">
    <source>
    </source>
</evidence>
<evidence type="ECO:0000303" key="5">
    <source>
    </source>
</evidence>
<evidence type="ECO:0000305" key="6"/>
<evidence type="ECO:0000305" key="7">
    <source>
    </source>
</evidence>
<protein>
    <recommendedName>
        <fullName>Cyclic GMP-AMP synthase-like receptor 2</fullName>
        <shortName evidence="5">Cv-cGLR2</shortName>
        <ecNumber evidence="1">2.7.7.-</ecNumber>
    </recommendedName>
</protein>
<reference key="1">
    <citation type="submission" date="2017-02" db="EMBL/GenBank/DDBJ databases">
        <authorList>
            <person name="Warren W.C."/>
            <person name="Gomez-Chiarri M."/>
            <person name="Tomlinson C."/>
            <person name="Guo X."/>
        </authorList>
    </citation>
    <scope>NUCLEOTIDE SEQUENCE [LARGE SCALE GENOMIC DNA]</scope>
</reference>
<reference key="2">
    <citation type="journal article" date="2023" name="Cell">
        <title>cGLRs are a diverse family of pattern recognition receptors in innate immunity.</title>
        <authorList>
            <person name="Li Y."/>
            <person name="Slavik K.M."/>
            <person name="Toyoda H.C."/>
            <person name="Morehouse B.R."/>
            <person name="de Oliveira Mann C.C."/>
            <person name="Elek A."/>
            <person name="Levy S."/>
            <person name="Wang Z."/>
            <person name="Mears K.S."/>
            <person name="Liu J."/>
            <person name="Kashin D."/>
            <person name="Guo X."/>
            <person name="Mass T."/>
            <person name="Sebe-Pedros A."/>
            <person name="Schwede F."/>
            <person name="Kranzusch P.J."/>
        </authorList>
    </citation>
    <scope>FUNCTION</scope>
    <scope>MUTAGENESIS OF ASP-73</scope>
</reference>
<accession>A0A8B8EY61</accession>
<feature type="chain" id="PRO_0000460016" description="Cyclic GMP-AMP synthase-like receptor 2">
    <location>
        <begin position="1"/>
        <end position="632"/>
    </location>
</feature>
<feature type="binding site" evidence="3">
    <location>
        <position position="71"/>
    </location>
    <ligand>
        <name>Mg(2+)</name>
        <dbReference type="ChEBI" id="CHEBI:18420"/>
        <note>catalytic</note>
    </ligand>
</feature>
<feature type="binding site" evidence="7">
    <location>
        <position position="73"/>
    </location>
    <ligand>
        <name>Mg(2+)</name>
        <dbReference type="ChEBI" id="CHEBI:18420"/>
        <note>catalytic</note>
    </ligand>
</feature>
<feature type="binding site" evidence="3">
    <location>
        <position position="181"/>
    </location>
    <ligand>
        <name>Mg(2+)</name>
        <dbReference type="ChEBI" id="CHEBI:18420"/>
        <note>catalytic</note>
    </ligand>
</feature>
<feature type="binding site" evidence="2">
    <location>
        <position position="295"/>
    </location>
    <ligand>
        <name>Mn(2+)</name>
        <dbReference type="ChEBI" id="CHEBI:29035"/>
    </ligand>
</feature>
<feature type="mutagenesis site" description="Abolished nucleotidyltransferase activity." evidence="4">
    <original>D</original>
    <variation>N</variation>
    <location>
        <position position="73"/>
    </location>
</feature>
<organism>
    <name type="scientific">Crassostrea virginica</name>
    <name type="common">Eastern oyster</name>
    <dbReference type="NCBI Taxonomy" id="6565"/>
    <lineage>
        <taxon>Eukaryota</taxon>
        <taxon>Metazoa</taxon>
        <taxon>Spiralia</taxon>
        <taxon>Lophotrochozoa</taxon>
        <taxon>Mollusca</taxon>
        <taxon>Bivalvia</taxon>
        <taxon>Autobranchia</taxon>
        <taxon>Pteriomorphia</taxon>
        <taxon>Ostreida</taxon>
        <taxon>Ostreoidea</taxon>
        <taxon>Ostreidae</taxon>
        <taxon>Crassostrea</taxon>
    </lineage>
</organism>
<proteinExistence type="evidence at protein level"/>